<gene>
    <name evidence="1" type="primary">eno</name>
    <name type="ordered locus">Mevan_1383</name>
</gene>
<feature type="chain" id="PRO_0000337625" description="Enolase">
    <location>
        <begin position="1"/>
        <end position="426"/>
    </location>
</feature>
<feature type="active site" description="Proton donor" evidence="1">
    <location>
        <position position="209"/>
    </location>
</feature>
<feature type="active site" description="Proton acceptor" evidence="1">
    <location>
        <position position="338"/>
    </location>
</feature>
<feature type="binding site" evidence="1">
    <location>
        <position position="165"/>
    </location>
    <ligand>
        <name>(2R)-2-phosphoglycerate</name>
        <dbReference type="ChEBI" id="CHEBI:58289"/>
    </ligand>
</feature>
<feature type="binding site" evidence="1">
    <location>
        <position position="244"/>
    </location>
    <ligand>
        <name>Mg(2+)</name>
        <dbReference type="ChEBI" id="CHEBI:18420"/>
    </ligand>
</feature>
<feature type="binding site" evidence="1">
    <location>
        <position position="287"/>
    </location>
    <ligand>
        <name>Mg(2+)</name>
        <dbReference type="ChEBI" id="CHEBI:18420"/>
    </ligand>
</feature>
<feature type="binding site" evidence="1">
    <location>
        <position position="313"/>
    </location>
    <ligand>
        <name>Mg(2+)</name>
        <dbReference type="ChEBI" id="CHEBI:18420"/>
    </ligand>
</feature>
<feature type="binding site" evidence="1">
    <location>
        <position position="338"/>
    </location>
    <ligand>
        <name>(2R)-2-phosphoglycerate</name>
        <dbReference type="ChEBI" id="CHEBI:58289"/>
    </ligand>
</feature>
<feature type="binding site" evidence="1">
    <location>
        <position position="367"/>
    </location>
    <ligand>
        <name>(2R)-2-phosphoglycerate</name>
        <dbReference type="ChEBI" id="CHEBI:58289"/>
    </ligand>
</feature>
<feature type="binding site" evidence="1">
    <location>
        <position position="368"/>
    </location>
    <ligand>
        <name>(2R)-2-phosphoglycerate</name>
        <dbReference type="ChEBI" id="CHEBI:58289"/>
    </ligand>
</feature>
<feature type="binding site" evidence="1">
    <location>
        <position position="389"/>
    </location>
    <ligand>
        <name>(2R)-2-phosphoglycerate</name>
        <dbReference type="ChEBI" id="CHEBI:58289"/>
    </ligand>
</feature>
<dbReference type="EC" id="4.2.1.11" evidence="1"/>
<dbReference type="EMBL" id="CP000742">
    <property type="protein sequence ID" value="ABR55280.1"/>
    <property type="status" value="ALT_INIT"/>
    <property type="molecule type" value="Genomic_DNA"/>
</dbReference>
<dbReference type="RefSeq" id="WP_012066194.1">
    <property type="nucleotide sequence ID" value="NC_009634.1"/>
</dbReference>
<dbReference type="SMR" id="A6US08"/>
<dbReference type="STRING" id="406327.Mevan_1383"/>
<dbReference type="GeneID" id="5324765"/>
<dbReference type="KEGG" id="mvn:Mevan_1383"/>
<dbReference type="eggNOG" id="arCOG01169">
    <property type="taxonomic scope" value="Archaea"/>
</dbReference>
<dbReference type="HOGENOM" id="CLU_031223_2_1_2"/>
<dbReference type="OrthoDB" id="8680at2157"/>
<dbReference type="UniPathway" id="UPA00109">
    <property type="reaction ID" value="UER00187"/>
</dbReference>
<dbReference type="Proteomes" id="UP000001107">
    <property type="component" value="Chromosome"/>
</dbReference>
<dbReference type="GO" id="GO:0009986">
    <property type="term" value="C:cell surface"/>
    <property type="evidence" value="ECO:0007669"/>
    <property type="project" value="UniProtKB-SubCell"/>
</dbReference>
<dbReference type="GO" id="GO:0005576">
    <property type="term" value="C:extracellular region"/>
    <property type="evidence" value="ECO:0007669"/>
    <property type="project" value="UniProtKB-SubCell"/>
</dbReference>
<dbReference type="GO" id="GO:0000015">
    <property type="term" value="C:phosphopyruvate hydratase complex"/>
    <property type="evidence" value="ECO:0007669"/>
    <property type="project" value="InterPro"/>
</dbReference>
<dbReference type="GO" id="GO:0000287">
    <property type="term" value="F:magnesium ion binding"/>
    <property type="evidence" value="ECO:0007669"/>
    <property type="project" value="UniProtKB-UniRule"/>
</dbReference>
<dbReference type="GO" id="GO:0004634">
    <property type="term" value="F:phosphopyruvate hydratase activity"/>
    <property type="evidence" value="ECO:0007669"/>
    <property type="project" value="UniProtKB-UniRule"/>
</dbReference>
<dbReference type="GO" id="GO:0006096">
    <property type="term" value="P:glycolytic process"/>
    <property type="evidence" value="ECO:0007669"/>
    <property type="project" value="UniProtKB-UniRule"/>
</dbReference>
<dbReference type="CDD" id="cd03313">
    <property type="entry name" value="enolase"/>
    <property type="match status" value="1"/>
</dbReference>
<dbReference type="FunFam" id="3.30.390.10:FF:000001">
    <property type="entry name" value="Enolase"/>
    <property type="match status" value="1"/>
</dbReference>
<dbReference type="Gene3D" id="3.20.20.120">
    <property type="entry name" value="Enolase-like C-terminal domain"/>
    <property type="match status" value="1"/>
</dbReference>
<dbReference type="Gene3D" id="3.30.390.10">
    <property type="entry name" value="Enolase-like, N-terminal domain"/>
    <property type="match status" value="1"/>
</dbReference>
<dbReference type="HAMAP" id="MF_00318">
    <property type="entry name" value="Enolase"/>
    <property type="match status" value="1"/>
</dbReference>
<dbReference type="InterPro" id="IPR000941">
    <property type="entry name" value="Enolase"/>
</dbReference>
<dbReference type="InterPro" id="IPR036849">
    <property type="entry name" value="Enolase-like_C_sf"/>
</dbReference>
<dbReference type="InterPro" id="IPR029017">
    <property type="entry name" value="Enolase-like_N"/>
</dbReference>
<dbReference type="InterPro" id="IPR020810">
    <property type="entry name" value="Enolase_C"/>
</dbReference>
<dbReference type="InterPro" id="IPR020809">
    <property type="entry name" value="Enolase_CS"/>
</dbReference>
<dbReference type="InterPro" id="IPR020811">
    <property type="entry name" value="Enolase_N"/>
</dbReference>
<dbReference type="NCBIfam" id="TIGR01060">
    <property type="entry name" value="eno"/>
    <property type="match status" value="1"/>
</dbReference>
<dbReference type="PANTHER" id="PTHR11902">
    <property type="entry name" value="ENOLASE"/>
    <property type="match status" value="1"/>
</dbReference>
<dbReference type="PANTHER" id="PTHR11902:SF1">
    <property type="entry name" value="ENOLASE"/>
    <property type="match status" value="1"/>
</dbReference>
<dbReference type="Pfam" id="PF00113">
    <property type="entry name" value="Enolase_C"/>
    <property type="match status" value="1"/>
</dbReference>
<dbReference type="Pfam" id="PF03952">
    <property type="entry name" value="Enolase_N"/>
    <property type="match status" value="1"/>
</dbReference>
<dbReference type="PIRSF" id="PIRSF001400">
    <property type="entry name" value="Enolase"/>
    <property type="match status" value="1"/>
</dbReference>
<dbReference type="PRINTS" id="PR00148">
    <property type="entry name" value="ENOLASE"/>
</dbReference>
<dbReference type="SFLD" id="SFLDS00001">
    <property type="entry name" value="Enolase"/>
    <property type="match status" value="1"/>
</dbReference>
<dbReference type="SFLD" id="SFLDF00002">
    <property type="entry name" value="enolase"/>
    <property type="match status" value="1"/>
</dbReference>
<dbReference type="SMART" id="SM01192">
    <property type="entry name" value="Enolase_C"/>
    <property type="match status" value="1"/>
</dbReference>
<dbReference type="SMART" id="SM01193">
    <property type="entry name" value="Enolase_N"/>
    <property type="match status" value="1"/>
</dbReference>
<dbReference type="SUPFAM" id="SSF51604">
    <property type="entry name" value="Enolase C-terminal domain-like"/>
    <property type="match status" value="1"/>
</dbReference>
<dbReference type="SUPFAM" id="SSF54826">
    <property type="entry name" value="Enolase N-terminal domain-like"/>
    <property type="match status" value="1"/>
</dbReference>
<dbReference type="PROSITE" id="PS00164">
    <property type="entry name" value="ENOLASE"/>
    <property type="match status" value="1"/>
</dbReference>
<sequence length="426" mass="46118">MDNSFDIYEIKARQVLDSRGNPTIEAEVLTAGRGYGHAIVPSGASTGTFEAVELRDLGKKYGGKGVLNAVGNVNEIIAPELIGEDSRNQRLIDNIMINLDGTENKANLGANAILAVSMAVARAAADTSSLPLYKYLGGCNSYIMPVPMMNVLNGGKHAGNALDFQEFMIMPIGADSFSDAVRMCAETYQSLKKVISEKYGKDAVNIGDEGGFAPPVKTIDEAFSVLLEGVKRAGYENEIVFTLDSAASEFYDEKTNSYVVLGESLSTDKLIEIYKDMVSKYPIVSIEDPLFEGDFEGFKEITKELKGIQIIGDDIFVTNTNRLKKGIEMNAANALLLKVNQIGTISESIDAANLASRNGYGVIVSHRSGETEDSIISDLTVALNSGQIKTGAPARGERTAKYNQLIRIEEELQISKYAGKNFKIPF</sequence>
<name>ENO_METVS</name>
<keyword id="KW-0963">Cytoplasm</keyword>
<keyword id="KW-0324">Glycolysis</keyword>
<keyword id="KW-0456">Lyase</keyword>
<keyword id="KW-0460">Magnesium</keyword>
<keyword id="KW-0479">Metal-binding</keyword>
<keyword id="KW-0964">Secreted</keyword>
<protein>
    <recommendedName>
        <fullName evidence="1">Enolase</fullName>
        <ecNumber evidence="1">4.2.1.11</ecNumber>
    </recommendedName>
    <alternativeName>
        <fullName evidence="1">2-phospho-D-glycerate hydro-lyase</fullName>
    </alternativeName>
    <alternativeName>
        <fullName evidence="1">2-phosphoglycerate dehydratase</fullName>
    </alternativeName>
</protein>
<evidence type="ECO:0000255" key="1">
    <source>
        <dbReference type="HAMAP-Rule" id="MF_00318"/>
    </source>
</evidence>
<evidence type="ECO:0000305" key="2"/>
<proteinExistence type="inferred from homology"/>
<comment type="function">
    <text evidence="1">Catalyzes the reversible conversion of 2-phosphoglycerate (2-PG) into phosphoenolpyruvate (PEP). It is essential for the degradation of carbohydrates via glycolysis.</text>
</comment>
<comment type="catalytic activity">
    <reaction evidence="1">
        <text>(2R)-2-phosphoglycerate = phosphoenolpyruvate + H2O</text>
        <dbReference type="Rhea" id="RHEA:10164"/>
        <dbReference type="ChEBI" id="CHEBI:15377"/>
        <dbReference type="ChEBI" id="CHEBI:58289"/>
        <dbReference type="ChEBI" id="CHEBI:58702"/>
        <dbReference type="EC" id="4.2.1.11"/>
    </reaction>
</comment>
<comment type="cofactor">
    <cofactor evidence="1">
        <name>Mg(2+)</name>
        <dbReference type="ChEBI" id="CHEBI:18420"/>
    </cofactor>
    <text evidence="1">Binds a second Mg(2+) ion via substrate during catalysis.</text>
</comment>
<comment type="pathway">
    <text evidence="1">Carbohydrate degradation; glycolysis; pyruvate from D-glyceraldehyde 3-phosphate: step 4/5.</text>
</comment>
<comment type="subcellular location">
    <subcellularLocation>
        <location evidence="1">Cytoplasm</location>
    </subcellularLocation>
    <subcellularLocation>
        <location evidence="1">Secreted</location>
    </subcellularLocation>
    <subcellularLocation>
        <location evidence="1">Cell surface</location>
    </subcellularLocation>
    <text evidence="1">Fractions of enolase are present in both the cytoplasm and on the cell surface.</text>
</comment>
<comment type="similarity">
    <text evidence="1">Belongs to the enolase family.</text>
</comment>
<comment type="sequence caution" evidence="2">
    <conflict type="erroneous initiation">
        <sequence resource="EMBL-CDS" id="ABR55280"/>
    </conflict>
    <text>Extended N-terminus.</text>
</comment>
<organism>
    <name type="scientific">Methanococcus vannielii (strain ATCC 35089 / DSM 1224 / JCM 13029 / OCM 148 / SB)</name>
    <dbReference type="NCBI Taxonomy" id="406327"/>
    <lineage>
        <taxon>Archaea</taxon>
        <taxon>Methanobacteriati</taxon>
        <taxon>Methanobacteriota</taxon>
        <taxon>Methanomada group</taxon>
        <taxon>Methanococci</taxon>
        <taxon>Methanococcales</taxon>
        <taxon>Methanococcaceae</taxon>
        <taxon>Methanococcus</taxon>
    </lineage>
</organism>
<accession>A6US08</accession>
<reference key="1">
    <citation type="submission" date="2007-06" db="EMBL/GenBank/DDBJ databases">
        <title>Complete sequence of Methanococcus vannielii SB.</title>
        <authorList>
            <consortium name="US DOE Joint Genome Institute"/>
            <person name="Copeland A."/>
            <person name="Lucas S."/>
            <person name="Lapidus A."/>
            <person name="Barry K."/>
            <person name="Glavina del Rio T."/>
            <person name="Dalin E."/>
            <person name="Tice H."/>
            <person name="Pitluck S."/>
            <person name="Chain P."/>
            <person name="Malfatti S."/>
            <person name="Shin M."/>
            <person name="Vergez L."/>
            <person name="Schmutz J."/>
            <person name="Larimer F."/>
            <person name="Land M."/>
            <person name="Hauser L."/>
            <person name="Kyrpides N."/>
            <person name="Anderson I."/>
            <person name="Sieprawska-Lupa M."/>
            <person name="Whitman W.B."/>
            <person name="Richardson P."/>
        </authorList>
    </citation>
    <scope>NUCLEOTIDE SEQUENCE [LARGE SCALE GENOMIC DNA]</scope>
    <source>
        <strain>ATCC 35089 / DSM 1224 / JCM 13029 / OCM 148 / SB</strain>
    </source>
</reference>